<accession>P32662</accession>
<accession>Q2M750</accession>
<evidence type="ECO:0000250" key="1"/>
<evidence type="ECO:0000269" key="2">
    <source>
    </source>
</evidence>
<evidence type="ECO:0000269" key="3">
    <source>
    </source>
</evidence>
<evidence type="ECO:0000269" key="4">
    <source>
    </source>
</evidence>
<evidence type="ECO:0000305" key="5"/>
<dbReference type="EC" id="3.1.3.18"/>
<dbReference type="EMBL" id="Z19601">
    <property type="protein sequence ID" value="CAA79664.1"/>
    <property type="molecule type" value="Genomic_DNA"/>
</dbReference>
<dbReference type="EMBL" id="U18997">
    <property type="protein sequence ID" value="AAA58182.1"/>
    <property type="molecule type" value="Genomic_DNA"/>
</dbReference>
<dbReference type="EMBL" id="U00096">
    <property type="protein sequence ID" value="AAC76410.1"/>
    <property type="molecule type" value="Genomic_DNA"/>
</dbReference>
<dbReference type="EMBL" id="AP009048">
    <property type="protein sequence ID" value="BAE77906.1"/>
    <property type="molecule type" value="Genomic_DNA"/>
</dbReference>
<dbReference type="PIR" id="S55288">
    <property type="entry name" value="S55288"/>
</dbReference>
<dbReference type="RefSeq" id="NP_417844.1">
    <property type="nucleotide sequence ID" value="NC_000913.3"/>
</dbReference>
<dbReference type="RefSeq" id="WP_001031729.1">
    <property type="nucleotide sequence ID" value="NZ_STEB01000004.1"/>
</dbReference>
<dbReference type="SMR" id="P32662"/>
<dbReference type="BioGRID" id="4259294">
    <property type="interactions" value="68"/>
</dbReference>
<dbReference type="BioGRID" id="852204">
    <property type="interactions" value="2"/>
</dbReference>
<dbReference type="FunCoup" id="P32662">
    <property type="interactions" value="585"/>
</dbReference>
<dbReference type="IntAct" id="P32662">
    <property type="interactions" value="13"/>
</dbReference>
<dbReference type="STRING" id="511145.b3385"/>
<dbReference type="jPOST" id="P32662"/>
<dbReference type="PaxDb" id="511145-b3385"/>
<dbReference type="DNASU" id="947895"/>
<dbReference type="EnsemblBacteria" id="AAC76410">
    <property type="protein sequence ID" value="AAC76410"/>
    <property type="gene ID" value="b3385"/>
</dbReference>
<dbReference type="GeneID" id="947895"/>
<dbReference type="KEGG" id="ecj:JW3348"/>
<dbReference type="KEGG" id="eco:b3385"/>
<dbReference type="KEGG" id="ecoc:C3026_18370"/>
<dbReference type="PATRIC" id="fig|1411691.4.peg.3345"/>
<dbReference type="EchoBASE" id="EB1817"/>
<dbReference type="eggNOG" id="COG0546">
    <property type="taxonomic scope" value="Bacteria"/>
</dbReference>
<dbReference type="HOGENOM" id="CLU_045011_19_1_6"/>
<dbReference type="InParanoid" id="P32662"/>
<dbReference type="OMA" id="YLCGKFG"/>
<dbReference type="OrthoDB" id="9776368at2"/>
<dbReference type="PhylomeDB" id="P32662"/>
<dbReference type="BioCyc" id="EcoCyc:GPH-MONOMER"/>
<dbReference type="BioCyc" id="MetaCyc:GPH-MONOMER"/>
<dbReference type="SABIO-RK" id="P32662"/>
<dbReference type="UniPathway" id="UPA00865">
    <property type="reaction ID" value="UER00834"/>
</dbReference>
<dbReference type="PRO" id="PR:P32662"/>
<dbReference type="Proteomes" id="UP000000625">
    <property type="component" value="Chromosome"/>
</dbReference>
<dbReference type="GO" id="GO:0005829">
    <property type="term" value="C:cytosol"/>
    <property type="evidence" value="ECO:0000314"/>
    <property type="project" value="EcoCyc"/>
</dbReference>
<dbReference type="GO" id="GO:0031404">
    <property type="term" value="F:chloride ion binding"/>
    <property type="evidence" value="ECO:0000314"/>
    <property type="project" value="EcoCyc"/>
</dbReference>
<dbReference type="GO" id="GO:0000287">
    <property type="term" value="F:magnesium ion binding"/>
    <property type="evidence" value="ECO:0000314"/>
    <property type="project" value="EcoCyc"/>
</dbReference>
<dbReference type="GO" id="GO:0008967">
    <property type="term" value="F:phosphoglycolate phosphatase activity"/>
    <property type="evidence" value="ECO:0000314"/>
    <property type="project" value="EcoCyc"/>
</dbReference>
<dbReference type="GO" id="GO:0005975">
    <property type="term" value="P:carbohydrate metabolic process"/>
    <property type="evidence" value="ECO:0007669"/>
    <property type="project" value="InterPro"/>
</dbReference>
<dbReference type="GO" id="GO:0006281">
    <property type="term" value="P:DNA repair"/>
    <property type="evidence" value="ECO:0000315"/>
    <property type="project" value="EcoCyc"/>
</dbReference>
<dbReference type="GO" id="GO:0046295">
    <property type="term" value="P:glycolate biosynthetic process"/>
    <property type="evidence" value="ECO:0007669"/>
    <property type="project" value="UniProtKB-UniRule"/>
</dbReference>
<dbReference type="CDD" id="cd16417">
    <property type="entry name" value="HAD_PGPase"/>
    <property type="match status" value="1"/>
</dbReference>
<dbReference type="FunFam" id="1.10.150.240:FF:000003">
    <property type="entry name" value="Phosphoglycolate phosphatase"/>
    <property type="match status" value="1"/>
</dbReference>
<dbReference type="FunFam" id="3.40.50.1000:FF:000022">
    <property type="entry name" value="Phosphoglycolate phosphatase"/>
    <property type="match status" value="1"/>
</dbReference>
<dbReference type="Gene3D" id="3.40.50.1000">
    <property type="entry name" value="HAD superfamily/HAD-like"/>
    <property type="match status" value="1"/>
</dbReference>
<dbReference type="Gene3D" id="1.10.150.240">
    <property type="entry name" value="Putative phosphatase, domain 2"/>
    <property type="match status" value="1"/>
</dbReference>
<dbReference type="HAMAP" id="MF_00495">
    <property type="entry name" value="GPH_hydrolase_bact"/>
    <property type="match status" value="1"/>
</dbReference>
<dbReference type="InterPro" id="IPR050155">
    <property type="entry name" value="HAD-like_hydrolase_sf"/>
</dbReference>
<dbReference type="InterPro" id="IPR036412">
    <property type="entry name" value="HAD-like_sf"/>
</dbReference>
<dbReference type="InterPro" id="IPR006439">
    <property type="entry name" value="HAD-SF_hydro_IA"/>
</dbReference>
<dbReference type="InterPro" id="IPR023214">
    <property type="entry name" value="HAD_sf"/>
</dbReference>
<dbReference type="InterPro" id="IPR023198">
    <property type="entry name" value="PGP-like_dom2"/>
</dbReference>
<dbReference type="InterPro" id="IPR037512">
    <property type="entry name" value="PGPase_prok"/>
</dbReference>
<dbReference type="NCBIfam" id="TIGR01549">
    <property type="entry name" value="HAD-SF-IA-v1"/>
    <property type="match status" value="1"/>
</dbReference>
<dbReference type="NCBIfam" id="TIGR01509">
    <property type="entry name" value="HAD-SF-IA-v3"/>
    <property type="match status" value="1"/>
</dbReference>
<dbReference type="NCBIfam" id="TIGR01449">
    <property type="entry name" value="PGP_bact"/>
    <property type="match status" value="1"/>
</dbReference>
<dbReference type="NCBIfam" id="NF009694">
    <property type="entry name" value="PRK13222.1-1"/>
    <property type="match status" value="1"/>
</dbReference>
<dbReference type="NCBIfam" id="NF009695">
    <property type="entry name" value="PRK13222.1-2"/>
    <property type="match status" value="1"/>
</dbReference>
<dbReference type="NCBIfam" id="NF009697">
    <property type="entry name" value="PRK13222.1-4"/>
    <property type="match status" value="1"/>
</dbReference>
<dbReference type="PANTHER" id="PTHR43434">
    <property type="entry name" value="PHOSPHOGLYCOLATE PHOSPHATASE"/>
    <property type="match status" value="1"/>
</dbReference>
<dbReference type="PANTHER" id="PTHR43434:SF1">
    <property type="entry name" value="PHOSPHOGLYCOLATE PHOSPHATASE"/>
    <property type="match status" value="1"/>
</dbReference>
<dbReference type="Pfam" id="PF00702">
    <property type="entry name" value="Hydrolase"/>
    <property type="match status" value="1"/>
</dbReference>
<dbReference type="PRINTS" id="PR00413">
    <property type="entry name" value="HADHALOGNASE"/>
</dbReference>
<dbReference type="SFLD" id="SFLDG01135">
    <property type="entry name" value="C1.5.6:_HAD__Beta-PGM__Phospha"/>
    <property type="match status" value="1"/>
</dbReference>
<dbReference type="SFLD" id="SFLDG01129">
    <property type="entry name" value="C1.5:_HAD__Beta-PGM__Phosphata"/>
    <property type="match status" value="1"/>
</dbReference>
<dbReference type="SUPFAM" id="SSF56784">
    <property type="entry name" value="HAD-like"/>
    <property type="match status" value="1"/>
</dbReference>
<comment type="function">
    <text evidence="4">Specifically catalyzes the dephosphorylation of 2-phosphoglycolate (2P-Gly). Is involved in the dissimilation of the intracellular 2-phosphoglycolate formed during the DNA repair of 3'-phosphoglycolate ends, a major class of DNA lesions induced by oxidative stress.</text>
</comment>
<comment type="catalytic activity">
    <reaction evidence="2">
        <text>2-phosphoglycolate + H2O = glycolate + phosphate</text>
        <dbReference type="Rhea" id="RHEA:14369"/>
        <dbReference type="ChEBI" id="CHEBI:15377"/>
        <dbReference type="ChEBI" id="CHEBI:29805"/>
        <dbReference type="ChEBI" id="CHEBI:43474"/>
        <dbReference type="ChEBI" id="CHEBI:58033"/>
        <dbReference type="EC" id="3.1.3.18"/>
    </reaction>
</comment>
<comment type="cofactor">
    <cofactor>
        <name>chloride</name>
        <dbReference type="ChEBI" id="CHEBI:17996"/>
    </cofactor>
</comment>
<comment type="cofactor">
    <cofactor>
        <name>Mg(2+)</name>
        <dbReference type="ChEBI" id="CHEBI:18420"/>
    </cofactor>
</comment>
<comment type="biophysicochemical properties">
    <kinetics>
        <KM evidence="3 4">210 uM for 2P-Gly</KM>
        <KM evidence="3 4">8.9 mM for acetyl-phosphate (with magnesium ions as cofactor and at pH 9)</KM>
        <KM evidence="3 4">0.13 mM for imido-diphosphate (with magnesium ions as cofactor and at pH 9)</KM>
        <Vmax evidence="3 4">208.0 umol/min/mg enzyme</Vmax>
    </kinetics>
    <phDependence>
        <text evidence="3 4">Optimum pH is 6.9.</text>
    </phDependence>
</comment>
<comment type="pathway">
    <text>Organic acid metabolism; glycolate biosynthesis; glycolate from 2-phosphoglycolate: step 1/1.</text>
</comment>
<comment type="subunit">
    <text evidence="3">Monomer.</text>
</comment>
<comment type="induction">
    <text evidence="3">Constitutively expressed.</text>
</comment>
<comment type="similarity">
    <text evidence="5">Belongs to the HAD-like hydrolase superfamily. CbbY/CbbZ/Gph/YieH family.</text>
</comment>
<proteinExistence type="evidence at protein level"/>
<reference key="1">
    <citation type="journal article" date="1995" name="Mol. Gen. Genet.">
        <title>Characterization of three genes in the dam-containing operon of Escherichia coli.</title>
        <authorList>
            <person name="Lyngstadaas A."/>
            <person name="Lobner-Olesen A."/>
            <person name="Boye E."/>
        </authorList>
    </citation>
    <scope>NUCLEOTIDE SEQUENCE [GENOMIC DNA]</scope>
</reference>
<reference key="2">
    <citation type="journal article" date="1997" name="Science">
        <title>The complete genome sequence of Escherichia coli K-12.</title>
        <authorList>
            <person name="Blattner F.R."/>
            <person name="Plunkett G. III"/>
            <person name="Bloch C.A."/>
            <person name="Perna N.T."/>
            <person name="Burland V."/>
            <person name="Riley M."/>
            <person name="Collado-Vides J."/>
            <person name="Glasner J.D."/>
            <person name="Rode C.K."/>
            <person name="Mayhew G.F."/>
            <person name="Gregor J."/>
            <person name="Davis N.W."/>
            <person name="Kirkpatrick H.A."/>
            <person name="Goeden M.A."/>
            <person name="Rose D.J."/>
            <person name="Mau B."/>
            <person name="Shao Y."/>
        </authorList>
    </citation>
    <scope>NUCLEOTIDE SEQUENCE [LARGE SCALE GENOMIC DNA]</scope>
    <source>
        <strain>K12 / MG1655 / ATCC 47076</strain>
    </source>
</reference>
<reference key="3">
    <citation type="journal article" date="2006" name="Mol. Syst. Biol.">
        <title>Highly accurate genome sequences of Escherichia coli K-12 strains MG1655 and W3110.</title>
        <authorList>
            <person name="Hayashi K."/>
            <person name="Morooka N."/>
            <person name="Yamamoto Y."/>
            <person name="Fujita K."/>
            <person name="Isono K."/>
            <person name="Choi S."/>
            <person name="Ohtsubo E."/>
            <person name="Baba T."/>
            <person name="Wanner B.L."/>
            <person name="Mori H."/>
            <person name="Horiuchi T."/>
        </authorList>
    </citation>
    <scope>NUCLEOTIDE SEQUENCE [LARGE SCALE GENOMIC DNA]</scope>
    <source>
        <strain>K12 / W3110 / ATCC 27325 / DSM 5911</strain>
    </source>
</reference>
<reference key="4">
    <citation type="journal article" date="1999" name="Biochim. Biophys. Acta">
        <title>The gene for 2-phosphoglycolate phosphatase (gph) in Escherichia coli is located in the same operon as dam and at least five other diverse genes.</title>
        <authorList>
            <person name="Lyngstadaas A."/>
            <person name="Lobner-Olesen A."/>
            <person name="Grelland E."/>
            <person name="Boye E."/>
        </authorList>
    </citation>
    <scope>CATALYTIC ACTIVITY</scope>
</reference>
<reference key="5">
    <citation type="journal article" date="2003" name="J. Bacteriol.">
        <title>Role of 2-phosphoglycolate phosphatase of Escherichia coli in metabolism of the 2-phosphoglycolate formed in DNA repair.</title>
        <authorList>
            <person name="Pellicer M.T."/>
            <person name="Nunez M.F."/>
            <person name="Aguilar J."/>
            <person name="Badia J."/>
            <person name="Baldoma L."/>
        </authorList>
    </citation>
    <scope>PHYSIOLOGICAL ROLE</scope>
    <scope>COFACTOR</scope>
    <scope>BIOPHYSICOCHEMICAL PROPERTIES</scope>
    <scope>SUBUNIT</scope>
    <scope>TRANSCRIPTIONAL REGULATION</scope>
    <source>
        <strain>K12</strain>
    </source>
</reference>
<reference key="6">
    <citation type="journal article" date="2006" name="J. Biol. Chem.">
        <title>Genome-wide analysis of substrate specificities of the Escherichia coli haloacid dehalogenase-like phosphatase family.</title>
        <authorList>
            <person name="Kuznetsova E."/>
            <person name="Proudfoot M."/>
            <person name="Gonzalez C.F."/>
            <person name="Brown G."/>
            <person name="Omelchenko M.V."/>
            <person name="Borozan I."/>
            <person name="Carmel L."/>
            <person name="Wolf Y.I."/>
            <person name="Mori H."/>
            <person name="Savchenko A.V."/>
            <person name="Arrowsmith C.H."/>
            <person name="Koonin E.V."/>
            <person name="Edwards A.M."/>
            <person name="Yakunin A.F."/>
        </authorList>
    </citation>
    <scope>FUNCTION AS A PHOSPHATASE</scope>
    <scope>BIOPHYSICOCHEMICAL PROPERTIES</scope>
    <scope>SUBSTRATE SPECIFICITY</scope>
    <scope>COFACTOR</scope>
</reference>
<feature type="chain" id="PRO_0000108027" description="Phosphoglycolate phosphatase">
    <location>
        <begin position="1"/>
        <end position="252"/>
    </location>
</feature>
<feature type="active site" description="Nucleophile" evidence="1">
    <location>
        <position position="13"/>
    </location>
</feature>
<feature type="binding site" evidence="1">
    <location>
        <begin position="13"/>
        <end position="15"/>
    </location>
    <ligand>
        <name>substrate</name>
    </ligand>
</feature>
<feature type="binding site" evidence="1">
    <location>
        <position position="13"/>
    </location>
    <ligand>
        <name>Mg(2+)</name>
        <dbReference type="ChEBI" id="CHEBI:18420"/>
    </ligand>
</feature>
<feature type="binding site" evidence="1">
    <location>
        <position position="15"/>
    </location>
    <ligand>
        <name>Mg(2+)</name>
        <dbReference type="ChEBI" id="CHEBI:18420"/>
    </ligand>
</feature>
<feature type="binding site" evidence="1">
    <location>
        <position position="192"/>
    </location>
    <ligand>
        <name>Mg(2+)</name>
        <dbReference type="ChEBI" id="CHEBI:18420"/>
    </ligand>
</feature>
<organism>
    <name type="scientific">Escherichia coli (strain K12)</name>
    <dbReference type="NCBI Taxonomy" id="83333"/>
    <lineage>
        <taxon>Bacteria</taxon>
        <taxon>Pseudomonadati</taxon>
        <taxon>Pseudomonadota</taxon>
        <taxon>Gammaproteobacteria</taxon>
        <taxon>Enterobacterales</taxon>
        <taxon>Enterobacteriaceae</taxon>
        <taxon>Escherichia</taxon>
    </lineage>
</organism>
<gene>
    <name type="primary">gph</name>
    <name type="synonym">yhfE</name>
    <name type="ordered locus">b3385</name>
    <name type="ordered locus">JW3348</name>
</gene>
<sequence length="252" mass="27389">MNKFEDIRGVAFDLDGTLVDSAPGLAAAVDMALYALELPVAGEERVITWIGNGADVLMERALTWARQERATQRKTMGKPPVDDDIPAEEQVRILRKLFDRYYGEVAEEGTFLFPHVADTLGALQAKGLPLGLVTNKPTPFVAPLLEALDIAKYFSVVIGGDDVQNKKPHPDPLLLVAERMGIAPQQMLFVGDSRNDIQAAKAAGCPSVGLTYGYNYGEAIDLSQPDVIYQSINDLLPALGLPHSENQESKND</sequence>
<keyword id="KW-0119">Carbohydrate metabolism</keyword>
<keyword id="KW-0868">Chloride</keyword>
<keyword id="KW-0378">Hydrolase</keyword>
<keyword id="KW-0460">Magnesium</keyword>
<keyword id="KW-0479">Metal-binding</keyword>
<keyword id="KW-1185">Reference proteome</keyword>
<protein>
    <recommendedName>
        <fullName>Phosphoglycolate phosphatase</fullName>
        <shortName>PGP</shortName>
        <shortName>PGPase</shortName>
        <ecNumber>3.1.3.18</ecNumber>
    </recommendedName>
</protein>
<name>GPH_ECOLI</name>